<comment type="function">
    <text evidence="1">Catalyzes the transfer of a methyl group from 5-methyltetrahydrofolate to homocysteine resulting in methionine formation.</text>
</comment>
<comment type="catalytic activity">
    <reaction evidence="1">
        <text>5-methyltetrahydropteroyltri-L-glutamate + L-homocysteine = tetrahydropteroyltri-L-glutamate + L-methionine</text>
        <dbReference type="Rhea" id="RHEA:21196"/>
        <dbReference type="ChEBI" id="CHEBI:57844"/>
        <dbReference type="ChEBI" id="CHEBI:58140"/>
        <dbReference type="ChEBI" id="CHEBI:58199"/>
        <dbReference type="ChEBI" id="CHEBI:58207"/>
        <dbReference type="EC" id="2.1.1.14"/>
    </reaction>
</comment>
<comment type="cofactor">
    <cofactor evidence="1">
        <name>Zn(2+)</name>
        <dbReference type="ChEBI" id="CHEBI:29105"/>
    </cofactor>
    <text evidence="1">Binds 1 zinc ion per subunit.</text>
</comment>
<comment type="pathway">
    <text evidence="1">Amino-acid biosynthesis; L-methionine biosynthesis via de novo pathway; L-methionine from L-homocysteine (MetE route): step 1/1.</text>
</comment>
<comment type="similarity">
    <text evidence="1">Belongs to the vitamin-B12 independent methionine synthase family.</text>
</comment>
<reference key="1">
    <citation type="journal article" date="2009" name="PLoS Genet.">
        <title>Organised genome dynamics in the Escherichia coli species results in highly diverse adaptive paths.</title>
        <authorList>
            <person name="Touchon M."/>
            <person name="Hoede C."/>
            <person name="Tenaillon O."/>
            <person name="Barbe V."/>
            <person name="Baeriswyl S."/>
            <person name="Bidet P."/>
            <person name="Bingen E."/>
            <person name="Bonacorsi S."/>
            <person name="Bouchier C."/>
            <person name="Bouvet O."/>
            <person name="Calteau A."/>
            <person name="Chiapello H."/>
            <person name="Clermont O."/>
            <person name="Cruveiller S."/>
            <person name="Danchin A."/>
            <person name="Diard M."/>
            <person name="Dossat C."/>
            <person name="Karoui M.E."/>
            <person name="Frapy E."/>
            <person name="Garry L."/>
            <person name="Ghigo J.M."/>
            <person name="Gilles A.M."/>
            <person name="Johnson J."/>
            <person name="Le Bouguenec C."/>
            <person name="Lescat M."/>
            <person name="Mangenot S."/>
            <person name="Martinez-Jehanne V."/>
            <person name="Matic I."/>
            <person name="Nassif X."/>
            <person name="Oztas S."/>
            <person name="Petit M.A."/>
            <person name="Pichon C."/>
            <person name="Rouy Z."/>
            <person name="Ruf C.S."/>
            <person name="Schneider D."/>
            <person name="Tourret J."/>
            <person name="Vacherie B."/>
            <person name="Vallenet D."/>
            <person name="Medigue C."/>
            <person name="Rocha E.P.C."/>
            <person name="Denamur E."/>
        </authorList>
    </citation>
    <scope>NUCLEOTIDE SEQUENCE [LARGE SCALE GENOMIC DNA]</scope>
    <source>
        <strain>S88 / ExPEC</strain>
    </source>
</reference>
<feature type="chain" id="PRO_1000191199" description="5-methyltetrahydropteroyltriglutamate--homocysteine methyltransferase">
    <location>
        <begin position="1"/>
        <end position="753"/>
    </location>
</feature>
<feature type="active site" description="Proton donor" evidence="1">
    <location>
        <position position="694"/>
    </location>
</feature>
<feature type="binding site" evidence="1">
    <location>
        <begin position="17"/>
        <end position="20"/>
    </location>
    <ligand>
        <name>5-methyltetrahydropteroyltri-L-glutamate</name>
        <dbReference type="ChEBI" id="CHEBI:58207"/>
    </ligand>
</feature>
<feature type="binding site" evidence="1">
    <location>
        <position position="117"/>
    </location>
    <ligand>
        <name>5-methyltetrahydropteroyltri-L-glutamate</name>
        <dbReference type="ChEBI" id="CHEBI:58207"/>
    </ligand>
</feature>
<feature type="binding site" evidence="1">
    <location>
        <begin position="431"/>
        <end position="433"/>
    </location>
    <ligand>
        <name>L-homocysteine</name>
        <dbReference type="ChEBI" id="CHEBI:58199"/>
    </ligand>
</feature>
<feature type="binding site" evidence="1">
    <location>
        <begin position="431"/>
        <end position="433"/>
    </location>
    <ligand>
        <name>L-methionine</name>
        <dbReference type="ChEBI" id="CHEBI:57844"/>
    </ligand>
</feature>
<feature type="binding site" evidence="1">
    <location>
        <position position="484"/>
    </location>
    <ligand>
        <name>L-homocysteine</name>
        <dbReference type="ChEBI" id="CHEBI:58199"/>
    </ligand>
</feature>
<feature type="binding site" evidence="1">
    <location>
        <position position="484"/>
    </location>
    <ligand>
        <name>L-methionine</name>
        <dbReference type="ChEBI" id="CHEBI:57844"/>
    </ligand>
</feature>
<feature type="binding site" evidence="1">
    <location>
        <begin position="515"/>
        <end position="516"/>
    </location>
    <ligand>
        <name>5-methyltetrahydropteroyltri-L-glutamate</name>
        <dbReference type="ChEBI" id="CHEBI:58207"/>
    </ligand>
</feature>
<feature type="binding site" evidence="1">
    <location>
        <position position="561"/>
    </location>
    <ligand>
        <name>5-methyltetrahydropteroyltri-L-glutamate</name>
        <dbReference type="ChEBI" id="CHEBI:58207"/>
    </ligand>
</feature>
<feature type="binding site" evidence="1">
    <location>
        <position position="599"/>
    </location>
    <ligand>
        <name>L-homocysteine</name>
        <dbReference type="ChEBI" id="CHEBI:58199"/>
    </ligand>
</feature>
<feature type="binding site" evidence="1">
    <location>
        <position position="599"/>
    </location>
    <ligand>
        <name>L-methionine</name>
        <dbReference type="ChEBI" id="CHEBI:57844"/>
    </ligand>
</feature>
<feature type="binding site" evidence="1">
    <location>
        <position position="605"/>
    </location>
    <ligand>
        <name>5-methyltetrahydropteroyltri-L-glutamate</name>
        <dbReference type="ChEBI" id="CHEBI:58207"/>
    </ligand>
</feature>
<feature type="binding site" evidence="1">
    <location>
        <position position="641"/>
    </location>
    <ligand>
        <name>Zn(2+)</name>
        <dbReference type="ChEBI" id="CHEBI:29105"/>
        <note>catalytic</note>
    </ligand>
</feature>
<feature type="binding site" evidence="1">
    <location>
        <position position="643"/>
    </location>
    <ligand>
        <name>Zn(2+)</name>
        <dbReference type="ChEBI" id="CHEBI:29105"/>
        <note>catalytic</note>
    </ligand>
</feature>
<feature type="binding site" evidence="1">
    <location>
        <position position="665"/>
    </location>
    <ligand>
        <name>Zn(2+)</name>
        <dbReference type="ChEBI" id="CHEBI:29105"/>
        <note>catalytic</note>
    </ligand>
</feature>
<feature type="binding site" evidence="1">
    <location>
        <position position="726"/>
    </location>
    <ligand>
        <name>Zn(2+)</name>
        <dbReference type="ChEBI" id="CHEBI:29105"/>
        <note>catalytic</note>
    </ligand>
</feature>
<accession>B7MH94</accession>
<proteinExistence type="inferred from homology"/>
<protein>
    <recommendedName>
        <fullName evidence="1">5-methyltetrahydropteroyltriglutamate--homocysteine methyltransferase</fullName>
        <ecNumber evidence="1">2.1.1.14</ecNumber>
    </recommendedName>
    <alternativeName>
        <fullName evidence="1">Cobalamin-independent methionine synthase</fullName>
    </alternativeName>
    <alternativeName>
        <fullName evidence="1">Methionine synthase, vitamin-B12 independent isozyme</fullName>
    </alternativeName>
</protein>
<sequence>MTILNHTLGFPRVGLRRELKKAQESYWAGNSTREELLAVGRELRARHWDQQKQAGIDLLPVGDFAWYDHVLTTSLLLGNVPQRHQNNDGSVDIDTLFRIGRGRAPTGEPAAAAEMTKWFNTNYHYMVPEFVKGQQFKLTWTQLLEEVDEALALGHKVKPVLLGPITYLWLGKVKGEQFDRLSLLNDILPVYQQVLAELAKRGIEWVQIDEPALVLELPQAWLNAYKPAYDALQGQVKLLLTTYFEGVTPNLDTITALPVQGLHVDLVHGKDDVAELHKRLPSDWLLSAGLINGRNVWRADLTEKYAQIKDIVGKRDLWVASSCSLLHSPIDLSVETRLDAEVKSWFAFALQKCHELALLRDALNSGDTAALAEWSAPIQARRHSTRVHNPAVEKRLAAITAQDSQRANVYEVRAEAQRARFKLPAWPTTTIGSFPQTTEIRTLRLDFKKGNLDANNYRTGIAEHIKQAIVEQERLGLDVLVHGEAERNDMVEYFGEHLDGFVFTQNGWVQSYGSRCVKPPIVIGDVSRPAPITVEWAKYAQSLTDKPVKGMLTGPVTILCWSFPREDVSRETIAKQIALALRDEVADLEAAGIGIIQIDEPALREGLPLRRSDWDAYLQWGVEAFRINAAVAKDDTQIHTHMCYCEFNDIMDSIAALDADVITIETSRSDMELLESFEEFDYPNEIGPGVYDIHSPNVPSVEWIEALLKKAAKRIPAERLWVNPDCGLKTRGWPETRAALANMVQAAQNLRRG</sequence>
<gene>
    <name evidence="1" type="primary">metE</name>
    <name type="ordered locus">ECS88_4257</name>
</gene>
<keyword id="KW-0028">Amino-acid biosynthesis</keyword>
<keyword id="KW-0479">Metal-binding</keyword>
<keyword id="KW-0486">Methionine biosynthesis</keyword>
<keyword id="KW-0489">Methyltransferase</keyword>
<keyword id="KW-1185">Reference proteome</keyword>
<keyword id="KW-0677">Repeat</keyword>
<keyword id="KW-0808">Transferase</keyword>
<keyword id="KW-0862">Zinc</keyword>
<name>METE_ECO45</name>
<evidence type="ECO:0000255" key="1">
    <source>
        <dbReference type="HAMAP-Rule" id="MF_00172"/>
    </source>
</evidence>
<organism>
    <name type="scientific">Escherichia coli O45:K1 (strain S88 / ExPEC)</name>
    <dbReference type="NCBI Taxonomy" id="585035"/>
    <lineage>
        <taxon>Bacteria</taxon>
        <taxon>Pseudomonadati</taxon>
        <taxon>Pseudomonadota</taxon>
        <taxon>Gammaproteobacteria</taxon>
        <taxon>Enterobacterales</taxon>
        <taxon>Enterobacteriaceae</taxon>
        <taxon>Escherichia</taxon>
    </lineage>
</organism>
<dbReference type="EC" id="2.1.1.14" evidence="1"/>
<dbReference type="EMBL" id="CU928161">
    <property type="protein sequence ID" value="CAR05448.1"/>
    <property type="molecule type" value="Genomic_DNA"/>
</dbReference>
<dbReference type="RefSeq" id="WP_000153955.1">
    <property type="nucleotide sequence ID" value="NC_011742.1"/>
</dbReference>
<dbReference type="SMR" id="B7MH94"/>
<dbReference type="KEGG" id="ecz:ECS88_4257"/>
<dbReference type="HOGENOM" id="CLU_013175_0_0_6"/>
<dbReference type="UniPathway" id="UPA00051">
    <property type="reaction ID" value="UER00082"/>
</dbReference>
<dbReference type="Proteomes" id="UP000000747">
    <property type="component" value="Chromosome"/>
</dbReference>
<dbReference type="GO" id="GO:0003871">
    <property type="term" value="F:5-methyltetrahydropteroyltriglutamate-homocysteine S-methyltransferase activity"/>
    <property type="evidence" value="ECO:0007669"/>
    <property type="project" value="UniProtKB-UniRule"/>
</dbReference>
<dbReference type="GO" id="GO:0008270">
    <property type="term" value="F:zinc ion binding"/>
    <property type="evidence" value="ECO:0007669"/>
    <property type="project" value="InterPro"/>
</dbReference>
<dbReference type="GO" id="GO:0009086">
    <property type="term" value="P:methionine biosynthetic process"/>
    <property type="evidence" value="ECO:0007669"/>
    <property type="project" value="UniProtKB-UniRule"/>
</dbReference>
<dbReference type="GO" id="GO:0032259">
    <property type="term" value="P:methylation"/>
    <property type="evidence" value="ECO:0007669"/>
    <property type="project" value="UniProtKB-KW"/>
</dbReference>
<dbReference type="CDD" id="cd03311">
    <property type="entry name" value="CIMS_C_terminal_like"/>
    <property type="match status" value="1"/>
</dbReference>
<dbReference type="CDD" id="cd03312">
    <property type="entry name" value="CIMS_N_terminal_like"/>
    <property type="match status" value="1"/>
</dbReference>
<dbReference type="FunFam" id="3.20.20.210:FF:000002">
    <property type="entry name" value="5-methyltetrahydropteroyltriglutamate--homocysteine methyltransferase"/>
    <property type="match status" value="1"/>
</dbReference>
<dbReference type="FunFam" id="3.20.20.210:FF:000003">
    <property type="entry name" value="5-methyltetrahydropteroyltriglutamate--homocysteine methyltransferase"/>
    <property type="match status" value="1"/>
</dbReference>
<dbReference type="Gene3D" id="3.20.20.210">
    <property type="match status" value="2"/>
</dbReference>
<dbReference type="HAMAP" id="MF_00172">
    <property type="entry name" value="Meth_synth"/>
    <property type="match status" value="1"/>
</dbReference>
<dbReference type="InterPro" id="IPR013215">
    <property type="entry name" value="Cbl-indep_Met_Synth_N"/>
</dbReference>
<dbReference type="InterPro" id="IPR006276">
    <property type="entry name" value="Cobalamin-indep_Met_synthase"/>
</dbReference>
<dbReference type="InterPro" id="IPR002629">
    <property type="entry name" value="Met_Synth_C/arc"/>
</dbReference>
<dbReference type="InterPro" id="IPR038071">
    <property type="entry name" value="UROD/MetE-like_sf"/>
</dbReference>
<dbReference type="NCBIfam" id="TIGR01371">
    <property type="entry name" value="met_syn_B12ind"/>
    <property type="match status" value="1"/>
</dbReference>
<dbReference type="NCBIfam" id="NF003556">
    <property type="entry name" value="PRK05222.1"/>
    <property type="match status" value="1"/>
</dbReference>
<dbReference type="PANTHER" id="PTHR30519">
    <property type="entry name" value="5-METHYLTETRAHYDROPTEROYLTRIGLUTAMATE--HOMOCYSTEINE METHYLTRANSFERASE"/>
    <property type="match status" value="1"/>
</dbReference>
<dbReference type="Pfam" id="PF08267">
    <property type="entry name" value="Meth_synt_1"/>
    <property type="match status" value="1"/>
</dbReference>
<dbReference type="Pfam" id="PF01717">
    <property type="entry name" value="Meth_synt_2"/>
    <property type="match status" value="1"/>
</dbReference>
<dbReference type="PIRSF" id="PIRSF000382">
    <property type="entry name" value="MeTrfase_B12_ind"/>
    <property type="match status" value="1"/>
</dbReference>
<dbReference type="SUPFAM" id="SSF51726">
    <property type="entry name" value="UROD/MetE-like"/>
    <property type="match status" value="2"/>
</dbReference>